<gene>
    <name type="ordered locus">AZOSEA30990</name>
    <name type="ORF">ebA5450</name>
</gene>
<protein>
    <recommendedName>
        <fullName evidence="1">7-methyl-GTP pyrophosphatase</fullName>
        <shortName evidence="1">m(7)GTP pyrophosphatase</shortName>
        <ecNumber evidence="1">3.6.1.-</ecNumber>
    </recommendedName>
</protein>
<comment type="function">
    <text evidence="1">Nucleoside triphosphate pyrophosphatase that hydrolyzes 7-methyl-GTP (m(7)GTP). May have a dual role in cell division arrest and in preventing the incorporation of modified nucleotides into cellular nucleic acids.</text>
</comment>
<comment type="catalytic activity">
    <reaction evidence="1">
        <text>N(7)-methyl-GTP + H2O = N(7)-methyl-GMP + diphosphate + H(+)</text>
        <dbReference type="Rhea" id="RHEA:58744"/>
        <dbReference type="ChEBI" id="CHEBI:15377"/>
        <dbReference type="ChEBI" id="CHEBI:15378"/>
        <dbReference type="ChEBI" id="CHEBI:33019"/>
        <dbReference type="ChEBI" id="CHEBI:58285"/>
        <dbReference type="ChEBI" id="CHEBI:87133"/>
    </reaction>
</comment>
<comment type="cofactor">
    <cofactor evidence="1">
        <name>a divalent metal cation</name>
        <dbReference type="ChEBI" id="CHEBI:60240"/>
    </cofactor>
</comment>
<comment type="subcellular location">
    <subcellularLocation>
        <location evidence="1">Cytoplasm</location>
    </subcellularLocation>
</comment>
<comment type="similarity">
    <text evidence="1">Belongs to the Maf family. YceF subfamily.</text>
</comment>
<comment type="sequence caution" evidence="2">
    <conflict type="erroneous initiation">
        <sequence resource="EMBL-CDS" id="CAI09224"/>
    </conflict>
</comment>
<reference key="1">
    <citation type="journal article" date="2005" name="Arch. Microbiol.">
        <title>The genome sequence of an anaerobic aromatic-degrading denitrifying bacterium, strain EbN1.</title>
        <authorList>
            <person name="Rabus R."/>
            <person name="Kube M."/>
            <person name="Heider J."/>
            <person name="Beck A."/>
            <person name="Heitmann K."/>
            <person name="Widdel F."/>
            <person name="Reinhardt R."/>
        </authorList>
    </citation>
    <scope>NUCLEOTIDE SEQUENCE [LARGE SCALE GENOMIC DNA]</scope>
    <source>
        <strain>DSM 19018 / LMG 30748 / EbN1</strain>
    </source>
</reference>
<feature type="chain" id="PRO_0000267247" description="7-methyl-GTP pyrophosphatase">
    <location>
        <begin position="1"/>
        <end position="194"/>
    </location>
</feature>
<feature type="active site" description="Proton acceptor" evidence="1">
    <location>
        <position position="71"/>
    </location>
</feature>
<feature type="site" description="Important for substrate specificity" evidence="1">
    <location>
        <position position="14"/>
    </location>
</feature>
<feature type="site" description="Important for substrate specificity" evidence="1">
    <location>
        <position position="72"/>
    </location>
</feature>
<feature type="site" description="Important for substrate specificity" evidence="1">
    <location>
        <position position="156"/>
    </location>
</feature>
<name>NTPPB_AROAE</name>
<sequence length="194" mass="21012">MRYSKLVLASTSAYRRLLLERFQLPFETARPDVDETPLPNEMPPDTANRLAVEKARAVAVRHPDALVIGSDQVAALNGEIFGKPGTVAAAIGQLQRMRGATVIFHTAVAVVNARTGQVRCENVPTRVKFRELSDDEIVRYVDKERPLDCAGSAKSEALGITLLDSLSGDDPTALVGLPLIALSRMLRAEGLLLP</sequence>
<keyword id="KW-0963">Cytoplasm</keyword>
<keyword id="KW-0378">Hydrolase</keyword>
<keyword id="KW-0546">Nucleotide metabolism</keyword>
<keyword id="KW-1185">Reference proteome</keyword>
<organism>
    <name type="scientific">Aromatoleum aromaticum (strain DSM 19018 / LMG 30748 / EbN1)</name>
    <name type="common">Azoarcus sp. (strain EbN1)</name>
    <dbReference type="NCBI Taxonomy" id="76114"/>
    <lineage>
        <taxon>Bacteria</taxon>
        <taxon>Pseudomonadati</taxon>
        <taxon>Pseudomonadota</taxon>
        <taxon>Betaproteobacteria</taxon>
        <taxon>Rhodocyclales</taxon>
        <taxon>Rhodocyclaceae</taxon>
        <taxon>Aromatoleum</taxon>
    </lineage>
</organism>
<evidence type="ECO:0000255" key="1">
    <source>
        <dbReference type="HAMAP-Rule" id="MF_00528"/>
    </source>
</evidence>
<evidence type="ECO:0000305" key="2"/>
<proteinExistence type="inferred from homology"/>
<dbReference type="EC" id="3.6.1.-" evidence="1"/>
<dbReference type="EMBL" id="CR555306">
    <property type="protein sequence ID" value="CAI09224.1"/>
    <property type="status" value="ALT_INIT"/>
    <property type="molecule type" value="Genomic_DNA"/>
</dbReference>
<dbReference type="RefSeq" id="WP_041646489.1">
    <property type="nucleotide sequence ID" value="NC_006513.1"/>
</dbReference>
<dbReference type="SMR" id="Q5P0E0"/>
<dbReference type="STRING" id="76114.ebA5450"/>
<dbReference type="KEGG" id="eba:ebA5450"/>
<dbReference type="eggNOG" id="COG0424">
    <property type="taxonomic scope" value="Bacteria"/>
</dbReference>
<dbReference type="HOGENOM" id="CLU_040416_1_0_4"/>
<dbReference type="Proteomes" id="UP000006552">
    <property type="component" value="Chromosome"/>
</dbReference>
<dbReference type="GO" id="GO:0005737">
    <property type="term" value="C:cytoplasm"/>
    <property type="evidence" value="ECO:0007669"/>
    <property type="project" value="UniProtKB-SubCell"/>
</dbReference>
<dbReference type="GO" id="GO:0047429">
    <property type="term" value="F:nucleoside triphosphate diphosphatase activity"/>
    <property type="evidence" value="ECO:0007669"/>
    <property type="project" value="InterPro"/>
</dbReference>
<dbReference type="GO" id="GO:0009117">
    <property type="term" value="P:nucleotide metabolic process"/>
    <property type="evidence" value="ECO:0007669"/>
    <property type="project" value="UniProtKB-KW"/>
</dbReference>
<dbReference type="CDD" id="cd00555">
    <property type="entry name" value="Maf"/>
    <property type="match status" value="1"/>
</dbReference>
<dbReference type="FunFam" id="3.90.950.10:FF:000005">
    <property type="entry name" value="7-methyl-GTP pyrophosphatase"/>
    <property type="match status" value="1"/>
</dbReference>
<dbReference type="Gene3D" id="3.90.950.10">
    <property type="match status" value="1"/>
</dbReference>
<dbReference type="HAMAP" id="MF_00528">
    <property type="entry name" value="Maf"/>
    <property type="match status" value="1"/>
</dbReference>
<dbReference type="InterPro" id="IPR029001">
    <property type="entry name" value="ITPase-like_fam"/>
</dbReference>
<dbReference type="InterPro" id="IPR003697">
    <property type="entry name" value="Maf-like"/>
</dbReference>
<dbReference type="NCBIfam" id="TIGR00172">
    <property type="entry name" value="maf"/>
    <property type="match status" value="1"/>
</dbReference>
<dbReference type="PANTHER" id="PTHR43213:SF10">
    <property type="entry name" value="7-METHYL-GTP PYROPHOSPHATASE"/>
    <property type="match status" value="1"/>
</dbReference>
<dbReference type="PANTHER" id="PTHR43213">
    <property type="entry name" value="BIFUNCTIONAL DTTP/UTP PYROPHOSPHATASE/METHYLTRANSFERASE PROTEIN-RELATED"/>
    <property type="match status" value="1"/>
</dbReference>
<dbReference type="Pfam" id="PF02545">
    <property type="entry name" value="Maf"/>
    <property type="match status" value="1"/>
</dbReference>
<dbReference type="PIRSF" id="PIRSF006305">
    <property type="entry name" value="Maf"/>
    <property type="match status" value="1"/>
</dbReference>
<dbReference type="SUPFAM" id="SSF52972">
    <property type="entry name" value="ITPase-like"/>
    <property type="match status" value="1"/>
</dbReference>
<accession>Q5P0E0</accession>